<gene>
    <name evidence="1" type="primary">pcm</name>
    <name type="ordered locus">EC55989_3015</name>
</gene>
<proteinExistence type="inferred from homology"/>
<feature type="chain" id="PRO_1000192390" description="Protein-L-isoaspartate O-methyltransferase">
    <location>
        <begin position="1"/>
        <end position="208"/>
    </location>
</feature>
<feature type="active site" evidence="1">
    <location>
        <position position="59"/>
    </location>
</feature>
<sequence>MVSRRVQALLDQLRAQGIQDEQVLNALAAVPREKFVDEAFEQKAWDNIALPIGQGQTISQPYMVARMTELLELTPQSRVLEIGTGSGYQTAILAHLVQHVCSVERIKGLQWQARRRLKNLDLHNVSTRHGDGWQGWQARAPFDAIIVTAAPPEIPTALMTQLDEGGILVLPVGEEHQYLKRVRRRGGEFIIDTVEAVRFVPLVKGELA</sequence>
<comment type="function">
    <text evidence="1">Catalyzes the methyl esterification of L-isoaspartyl residues in peptides and proteins that result from spontaneous decomposition of normal L-aspartyl and L-asparaginyl residues. It plays a role in the repair and/or degradation of damaged proteins.</text>
</comment>
<comment type="catalytic activity">
    <reaction evidence="1">
        <text>[protein]-L-isoaspartate + S-adenosyl-L-methionine = [protein]-L-isoaspartate alpha-methyl ester + S-adenosyl-L-homocysteine</text>
        <dbReference type="Rhea" id="RHEA:12705"/>
        <dbReference type="Rhea" id="RHEA-COMP:12143"/>
        <dbReference type="Rhea" id="RHEA-COMP:12144"/>
        <dbReference type="ChEBI" id="CHEBI:57856"/>
        <dbReference type="ChEBI" id="CHEBI:59789"/>
        <dbReference type="ChEBI" id="CHEBI:90596"/>
        <dbReference type="ChEBI" id="CHEBI:90598"/>
        <dbReference type="EC" id="2.1.1.77"/>
    </reaction>
</comment>
<comment type="subcellular location">
    <subcellularLocation>
        <location evidence="1">Cytoplasm</location>
    </subcellularLocation>
</comment>
<comment type="similarity">
    <text evidence="1">Belongs to the methyltransferase superfamily. L-isoaspartyl/D-aspartyl protein methyltransferase family.</text>
</comment>
<name>PIMT_ECO55</name>
<reference key="1">
    <citation type="journal article" date="2009" name="PLoS Genet.">
        <title>Organised genome dynamics in the Escherichia coli species results in highly diverse adaptive paths.</title>
        <authorList>
            <person name="Touchon M."/>
            <person name="Hoede C."/>
            <person name="Tenaillon O."/>
            <person name="Barbe V."/>
            <person name="Baeriswyl S."/>
            <person name="Bidet P."/>
            <person name="Bingen E."/>
            <person name="Bonacorsi S."/>
            <person name="Bouchier C."/>
            <person name="Bouvet O."/>
            <person name="Calteau A."/>
            <person name="Chiapello H."/>
            <person name="Clermont O."/>
            <person name="Cruveiller S."/>
            <person name="Danchin A."/>
            <person name="Diard M."/>
            <person name="Dossat C."/>
            <person name="Karoui M.E."/>
            <person name="Frapy E."/>
            <person name="Garry L."/>
            <person name="Ghigo J.M."/>
            <person name="Gilles A.M."/>
            <person name="Johnson J."/>
            <person name="Le Bouguenec C."/>
            <person name="Lescat M."/>
            <person name="Mangenot S."/>
            <person name="Martinez-Jehanne V."/>
            <person name="Matic I."/>
            <person name="Nassif X."/>
            <person name="Oztas S."/>
            <person name="Petit M.A."/>
            <person name="Pichon C."/>
            <person name="Rouy Z."/>
            <person name="Ruf C.S."/>
            <person name="Schneider D."/>
            <person name="Tourret J."/>
            <person name="Vacherie B."/>
            <person name="Vallenet D."/>
            <person name="Medigue C."/>
            <person name="Rocha E.P.C."/>
            <person name="Denamur E."/>
        </authorList>
    </citation>
    <scope>NUCLEOTIDE SEQUENCE [LARGE SCALE GENOMIC DNA]</scope>
    <source>
        <strain>55989 / EAEC</strain>
    </source>
</reference>
<dbReference type="EC" id="2.1.1.77" evidence="1"/>
<dbReference type="EMBL" id="CU928145">
    <property type="protein sequence ID" value="CAU98898.1"/>
    <property type="molecule type" value="Genomic_DNA"/>
</dbReference>
<dbReference type="RefSeq" id="WP_000254708.1">
    <property type="nucleotide sequence ID" value="NZ_CP028304.1"/>
</dbReference>
<dbReference type="SMR" id="B7LEG1"/>
<dbReference type="GeneID" id="93779263"/>
<dbReference type="KEGG" id="eck:EC55989_3015"/>
<dbReference type="HOGENOM" id="CLU_055432_2_0_6"/>
<dbReference type="Proteomes" id="UP000000746">
    <property type="component" value="Chromosome"/>
</dbReference>
<dbReference type="GO" id="GO:0005737">
    <property type="term" value="C:cytoplasm"/>
    <property type="evidence" value="ECO:0007669"/>
    <property type="project" value="UniProtKB-SubCell"/>
</dbReference>
<dbReference type="GO" id="GO:0004719">
    <property type="term" value="F:protein-L-isoaspartate (D-aspartate) O-methyltransferase activity"/>
    <property type="evidence" value="ECO:0007669"/>
    <property type="project" value="UniProtKB-UniRule"/>
</dbReference>
<dbReference type="GO" id="GO:0032259">
    <property type="term" value="P:methylation"/>
    <property type="evidence" value="ECO:0007669"/>
    <property type="project" value="UniProtKB-KW"/>
</dbReference>
<dbReference type="GO" id="GO:0036211">
    <property type="term" value="P:protein modification process"/>
    <property type="evidence" value="ECO:0007669"/>
    <property type="project" value="UniProtKB-UniRule"/>
</dbReference>
<dbReference type="GO" id="GO:0030091">
    <property type="term" value="P:protein repair"/>
    <property type="evidence" value="ECO:0007669"/>
    <property type="project" value="UniProtKB-UniRule"/>
</dbReference>
<dbReference type="CDD" id="cd02440">
    <property type="entry name" value="AdoMet_MTases"/>
    <property type="match status" value="1"/>
</dbReference>
<dbReference type="FunFam" id="3.40.50.150:FF:000010">
    <property type="entry name" value="Protein-L-isoaspartate O-methyltransferase"/>
    <property type="match status" value="1"/>
</dbReference>
<dbReference type="Gene3D" id="3.40.50.150">
    <property type="entry name" value="Vaccinia Virus protein VP39"/>
    <property type="match status" value="1"/>
</dbReference>
<dbReference type="HAMAP" id="MF_00090">
    <property type="entry name" value="PIMT"/>
    <property type="match status" value="1"/>
</dbReference>
<dbReference type="InterPro" id="IPR000682">
    <property type="entry name" value="PCMT"/>
</dbReference>
<dbReference type="InterPro" id="IPR029063">
    <property type="entry name" value="SAM-dependent_MTases_sf"/>
</dbReference>
<dbReference type="NCBIfam" id="TIGR00080">
    <property type="entry name" value="pimt"/>
    <property type="match status" value="1"/>
</dbReference>
<dbReference type="NCBIfam" id="NF001453">
    <property type="entry name" value="PRK00312.1"/>
    <property type="match status" value="1"/>
</dbReference>
<dbReference type="PANTHER" id="PTHR11579">
    <property type="entry name" value="PROTEIN-L-ISOASPARTATE O-METHYLTRANSFERASE"/>
    <property type="match status" value="1"/>
</dbReference>
<dbReference type="PANTHER" id="PTHR11579:SF0">
    <property type="entry name" value="PROTEIN-L-ISOASPARTATE(D-ASPARTATE) O-METHYLTRANSFERASE"/>
    <property type="match status" value="1"/>
</dbReference>
<dbReference type="Pfam" id="PF01135">
    <property type="entry name" value="PCMT"/>
    <property type="match status" value="1"/>
</dbReference>
<dbReference type="SUPFAM" id="SSF53335">
    <property type="entry name" value="S-adenosyl-L-methionine-dependent methyltransferases"/>
    <property type="match status" value="1"/>
</dbReference>
<dbReference type="PROSITE" id="PS01279">
    <property type="entry name" value="PCMT"/>
    <property type="match status" value="1"/>
</dbReference>
<organism>
    <name type="scientific">Escherichia coli (strain 55989 / EAEC)</name>
    <dbReference type="NCBI Taxonomy" id="585055"/>
    <lineage>
        <taxon>Bacteria</taxon>
        <taxon>Pseudomonadati</taxon>
        <taxon>Pseudomonadota</taxon>
        <taxon>Gammaproteobacteria</taxon>
        <taxon>Enterobacterales</taxon>
        <taxon>Enterobacteriaceae</taxon>
        <taxon>Escherichia</taxon>
    </lineage>
</organism>
<protein>
    <recommendedName>
        <fullName evidence="1">Protein-L-isoaspartate O-methyltransferase</fullName>
        <ecNumber evidence="1">2.1.1.77</ecNumber>
    </recommendedName>
    <alternativeName>
        <fullName evidence="1">L-isoaspartyl protein carboxyl methyltransferase</fullName>
    </alternativeName>
    <alternativeName>
        <fullName evidence="1">Protein L-isoaspartyl methyltransferase</fullName>
    </alternativeName>
    <alternativeName>
        <fullName evidence="1">Protein-beta-aspartate methyltransferase</fullName>
        <shortName evidence="1">PIMT</shortName>
    </alternativeName>
</protein>
<accession>B7LEG1</accession>
<keyword id="KW-0963">Cytoplasm</keyword>
<keyword id="KW-0489">Methyltransferase</keyword>
<keyword id="KW-1185">Reference proteome</keyword>
<keyword id="KW-0949">S-adenosyl-L-methionine</keyword>
<keyword id="KW-0808">Transferase</keyword>
<evidence type="ECO:0000255" key="1">
    <source>
        <dbReference type="HAMAP-Rule" id="MF_00090"/>
    </source>
</evidence>